<sequence length="156" mass="17492">MKLQLVAVGTKMPDWVQTGFMDYLHRFPKDMPFELTEIPAGKRGKNADIKRILEKEGEQMLAAVGKGNRIVTLDIPGTPWETPQLAQQLERWKQDGRNVSLLIGGPEGLAPACKAAAEQSWSLSPLTLPHPLVRVLVAESLYRAWSITTNHPYHRE</sequence>
<comment type="function">
    <text evidence="1">Specifically methylates the pseudouridine at position 1915 (m3Psi1915) in 23S rRNA.</text>
</comment>
<comment type="catalytic activity">
    <reaction evidence="1">
        <text>pseudouridine(1915) in 23S rRNA + S-adenosyl-L-methionine = N(3)-methylpseudouridine(1915) in 23S rRNA + S-adenosyl-L-homocysteine + H(+)</text>
        <dbReference type="Rhea" id="RHEA:42752"/>
        <dbReference type="Rhea" id="RHEA-COMP:10221"/>
        <dbReference type="Rhea" id="RHEA-COMP:10222"/>
        <dbReference type="ChEBI" id="CHEBI:15378"/>
        <dbReference type="ChEBI" id="CHEBI:57856"/>
        <dbReference type="ChEBI" id="CHEBI:59789"/>
        <dbReference type="ChEBI" id="CHEBI:65314"/>
        <dbReference type="ChEBI" id="CHEBI:74486"/>
        <dbReference type="EC" id="2.1.1.177"/>
    </reaction>
</comment>
<comment type="subunit">
    <text evidence="1">Homodimer.</text>
</comment>
<comment type="subcellular location">
    <subcellularLocation>
        <location evidence="1">Cytoplasm</location>
    </subcellularLocation>
</comment>
<comment type="similarity">
    <text evidence="1">Belongs to the RNA methyltransferase RlmH family.</text>
</comment>
<dbReference type="EC" id="2.1.1.177" evidence="1"/>
<dbReference type="EMBL" id="CP000826">
    <property type="protein sequence ID" value="ABV40306.1"/>
    <property type="molecule type" value="Genomic_DNA"/>
</dbReference>
<dbReference type="SMR" id="A8GB16"/>
<dbReference type="STRING" id="399741.Spro_1202"/>
<dbReference type="KEGG" id="spe:Spro_1202"/>
<dbReference type="eggNOG" id="COG1576">
    <property type="taxonomic scope" value="Bacteria"/>
</dbReference>
<dbReference type="HOGENOM" id="CLU_100552_1_0_6"/>
<dbReference type="OrthoDB" id="9806643at2"/>
<dbReference type="GO" id="GO:0005737">
    <property type="term" value="C:cytoplasm"/>
    <property type="evidence" value="ECO:0007669"/>
    <property type="project" value="UniProtKB-SubCell"/>
</dbReference>
<dbReference type="GO" id="GO:0070038">
    <property type="term" value="F:rRNA (pseudouridine-N3-)-methyltransferase activity"/>
    <property type="evidence" value="ECO:0007669"/>
    <property type="project" value="UniProtKB-UniRule"/>
</dbReference>
<dbReference type="CDD" id="cd18081">
    <property type="entry name" value="RlmH-like"/>
    <property type="match status" value="1"/>
</dbReference>
<dbReference type="FunFam" id="3.40.1280.10:FF:000004">
    <property type="entry name" value="Ribosomal RNA large subunit methyltransferase H"/>
    <property type="match status" value="1"/>
</dbReference>
<dbReference type="Gene3D" id="3.40.1280.10">
    <property type="match status" value="1"/>
</dbReference>
<dbReference type="HAMAP" id="MF_00658">
    <property type="entry name" value="23SrRNA_methyltr_H"/>
    <property type="match status" value="1"/>
</dbReference>
<dbReference type="InterPro" id="IPR029028">
    <property type="entry name" value="Alpha/beta_knot_MTases"/>
</dbReference>
<dbReference type="InterPro" id="IPR003742">
    <property type="entry name" value="RlmH-like"/>
</dbReference>
<dbReference type="InterPro" id="IPR029026">
    <property type="entry name" value="tRNA_m1G_MTases_N"/>
</dbReference>
<dbReference type="NCBIfam" id="NF000984">
    <property type="entry name" value="PRK00103.1-1"/>
    <property type="match status" value="1"/>
</dbReference>
<dbReference type="NCBIfam" id="NF000986">
    <property type="entry name" value="PRK00103.1-4"/>
    <property type="match status" value="1"/>
</dbReference>
<dbReference type="NCBIfam" id="TIGR00246">
    <property type="entry name" value="tRNA_RlmH_YbeA"/>
    <property type="match status" value="1"/>
</dbReference>
<dbReference type="PANTHER" id="PTHR33603">
    <property type="entry name" value="METHYLTRANSFERASE"/>
    <property type="match status" value="1"/>
</dbReference>
<dbReference type="PANTHER" id="PTHR33603:SF1">
    <property type="entry name" value="RIBOSOMAL RNA LARGE SUBUNIT METHYLTRANSFERASE H"/>
    <property type="match status" value="1"/>
</dbReference>
<dbReference type="Pfam" id="PF02590">
    <property type="entry name" value="SPOUT_MTase"/>
    <property type="match status" value="1"/>
</dbReference>
<dbReference type="PIRSF" id="PIRSF004505">
    <property type="entry name" value="MT_bac"/>
    <property type="match status" value="1"/>
</dbReference>
<dbReference type="SUPFAM" id="SSF75217">
    <property type="entry name" value="alpha/beta knot"/>
    <property type="match status" value="1"/>
</dbReference>
<evidence type="ECO:0000255" key="1">
    <source>
        <dbReference type="HAMAP-Rule" id="MF_00658"/>
    </source>
</evidence>
<gene>
    <name evidence="1" type="primary">rlmH</name>
    <name type="ordered locus">Spro_1202</name>
</gene>
<feature type="chain" id="PRO_1000061834" description="Ribosomal RNA large subunit methyltransferase H">
    <location>
        <begin position="1"/>
        <end position="156"/>
    </location>
</feature>
<feature type="binding site" evidence="1">
    <location>
        <position position="73"/>
    </location>
    <ligand>
        <name>S-adenosyl-L-methionine</name>
        <dbReference type="ChEBI" id="CHEBI:59789"/>
    </ligand>
</feature>
<feature type="binding site" evidence="1">
    <location>
        <position position="104"/>
    </location>
    <ligand>
        <name>S-adenosyl-L-methionine</name>
        <dbReference type="ChEBI" id="CHEBI:59789"/>
    </ligand>
</feature>
<feature type="binding site" evidence="1">
    <location>
        <begin position="123"/>
        <end position="128"/>
    </location>
    <ligand>
        <name>S-adenosyl-L-methionine</name>
        <dbReference type="ChEBI" id="CHEBI:59789"/>
    </ligand>
</feature>
<reference key="1">
    <citation type="submission" date="2007-09" db="EMBL/GenBank/DDBJ databases">
        <title>Complete sequence of chromosome of Serratia proteamaculans 568.</title>
        <authorList>
            <consortium name="US DOE Joint Genome Institute"/>
            <person name="Copeland A."/>
            <person name="Lucas S."/>
            <person name="Lapidus A."/>
            <person name="Barry K."/>
            <person name="Glavina del Rio T."/>
            <person name="Dalin E."/>
            <person name="Tice H."/>
            <person name="Pitluck S."/>
            <person name="Chain P."/>
            <person name="Malfatti S."/>
            <person name="Shin M."/>
            <person name="Vergez L."/>
            <person name="Schmutz J."/>
            <person name="Larimer F."/>
            <person name="Land M."/>
            <person name="Hauser L."/>
            <person name="Kyrpides N."/>
            <person name="Kim E."/>
            <person name="Taghavi S."/>
            <person name="Newman L."/>
            <person name="Vangronsveld J."/>
            <person name="van der Lelie D."/>
            <person name="Richardson P."/>
        </authorList>
    </citation>
    <scope>NUCLEOTIDE SEQUENCE [LARGE SCALE GENOMIC DNA]</scope>
    <source>
        <strain>568</strain>
    </source>
</reference>
<accession>A8GB16</accession>
<protein>
    <recommendedName>
        <fullName evidence="1">Ribosomal RNA large subunit methyltransferase H</fullName>
        <ecNumber evidence="1">2.1.1.177</ecNumber>
    </recommendedName>
    <alternativeName>
        <fullName evidence="1">23S rRNA (pseudouridine1915-N3)-methyltransferase</fullName>
    </alternativeName>
    <alternativeName>
        <fullName evidence="1">23S rRNA m3Psi1915 methyltransferase</fullName>
    </alternativeName>
    <alternativeName>
        <fullName evidence="1">rRNA (pseudouridine-N3-)-methyltransferase RlmH</fullName>
    </alternativeName>
</protein>
<name>RLMH_SERP5</name>
<keyword id="KW-0963">Cytoplasm</keyword>
<keyword id="KW-0489">Methyltransferase</keyword>
<keyword id="KW-0698">rRNA processing</keyword>
<keyword id="KW-0949">S-adenosyl-L-methionine</keyword>
<keyword id="KW-0808">Transferase</keyword>
<proteinExistence type="inferred from homology"/>
<organism>
    <name type="scientific">Serratia proteamaculans (strain 568)</name>
    <dbReference type="NCBI Taxonomy" id="399741"/>
    <lineage>
        <taxon>Bacteria</taxon>
        <taxon>Pseudomonadati</taxon>
        <taxon>Pseudomonadota</taxon>
        <taxon>Gammaproteobacteria</taxon>
        <taxon>Enterobacterales</taxon>
        <taxon>Yersiniaceae</taxon>
        <taxon>Serratia</taxon>
    </lineage>
</organism>